<dbReference type="EC" id="2.7.7.-" evidence="1"/>
<dbReference type="EC" id="2.7.7.108" evidence="1"/>
<dbReference type="EMBL" id="CP000090">
    <property type="protein sequence ID" value="AAZ60766.1"/>
    <property type="molecule type" value="Genomic_DNA"/>
</dbReference>
<dbReference type="SMR" id="Q472B7"/>
<dbReference type="STRING" id="264198.Reut_A1396"/>
<dbReference type="KEGG" id="reu:Reut_A1396"/>
<dbReference type="eggNOG" id="COG0397">
    <property type="taxonomic scope" value="Bacteria"/>
</dbReference>
<dbReference type="HOGENOM" id="CLU_010245_4_0_4"/>
<dbReference type="OrthoDB" id="9776281at2"/>
<dbReference type="GO" id="GO:0070733">
    <property type="term" value="F:AMPylase activity"/>
    <property type="evidence" value="ECO:0007669"/>
    <property type="project" value="RHEA"/>
</dbReference>
<dbReference type="GO" id="GO:0005524">
    <property type="term" value="F:ATP binding"/>
    <property type="evidence" value="ECO:0007669"/>
    <property type="project" value="UniProtKB-UniRule"/>
</dbReference>
<dbReference type="GO" id="GO:0000287">
    <property type="term" value="F:magnesium ion binding"/>
    <property type="evidence" value="ECO:0007669"/>
    <property type="project" value="UniProtKB-UniRule"/>
</dbReference>
<dbReference type="HAMAP" id="MF_00692">
    <property type="entry name" value="YdiU_SelO"/>
    <property type="match status" value="1"/>
</dbReference>
<dbReference type="InterPro" id="IPR003846">
    <property type="entry name" value="SelO"/>
</dbReference>
<dbReference type="NCBIfam" id="NF000658">
    <property type="entry name" value="PRK00029.1"/>
    <property type="match status" value="1"/>
</dbReference>
<dbReference type="PANTHER" id="PTHR32057">
    <property type="entry name" value="PROTEIN ADENYLYLTRANSFERASE SELO, MITOCHONDRIAL"/>
    <property type="match status" value="1"/>
</dbReference>
<dbReference type="PANTHER" id="PTHR32057:SF14">
    <property type="entry name" value="PROTEIN ADENYLYLTRANSFERASE SELO, MITOCHONDRIAL"/>
    <property type="match status" value="1"/>
</dbReference>
<dbReference type="Pfam" id="PF02696">
    <property type="entry name" value="SelO"/>
    <property type="match status" value="1"/>
</dbReference>
<accession>Q472B7</accession>
<feature type="chain" id="PRO_0000271850" description="Protein nucleotidyltransferase YdiU">
    <location>
        <begin position="1"/>
        <end position="520"/>
    </location>
</feature>
<feature type="active site" description="Proton acceptor" evidence="1">
    <location>
        <position position="269"/>
    </location>
</feature>
<feature type="binding site" evidence="1">
    <location>
        <position position="108"/>
    </location>
    <ligand>
        <name>ATP</name>
        <dbReference type="ChEBI" id="CHEBI:30616"/>
    </ligand>
</feature>
<feature type="binding site" evidence="1">
    <location>
        <position position="110"/>
    </location>
    <ligand>
        <name>ATP</name>
        <dbReference type="ChEBI" id="CHEBI:30616"/>
    </ligand>
</feature>
<feature type="binding site" evidence="1">
    <location>
        <position position="111"/>
    </location>
    <ligand>
        <name>ATP</name>
        <dbReference type="ChEBI" id="CHEBI:30616"/>
    </ligand>
</feature>
<feature type="binding site" evidence="1">
    <location>
        <position position="130"/>
    </location>
    <ligand>
        <name>ATP</name>
        <dbReference type="ChEBI" id="CHEBI:30616"/>
    </ligand>
</feature>
<feature type="binding site" evidence="1">
    <location>
        <position position="142"/>
    </location>
    <ligand>
        <name>ATP</name>
        <dbReference type="ChEBI" id="CHEBI:30616"/>
    </ligand>
</feature>
<feature type="binding site" evidence="1">
    <location>
        <position position="143"/>
    </location>
    <ligand>
        <name>ATP</name>
        <dbReference type="ChEBI" id="CHEBI:30616"/>
    </ligand>
</feature>
<feature type="binding site" evidence="1">
    <location>
        <position position="193"/>
    </location>
    <ligand>
        <name>ATP</name>
        <dbReference type="ChEBI" id="CHEBI:30616"/>
    </ligand>
</feature>
<feature type="binding site" evidence="1">
    <location>
        <position position="200"/>
    </location>
    <ligand>
        <name>ATP</name>
        <dbReference type="ChEBI" id="CHEBI:30616"/>
    </ligand>
</feature>
<feature type="binding site" evidence="1">
    <location>
        <position position="270"/>
    </location>
    <ligand>
        <name>Mg(2+)</name>
        <dbReference type="ChEBI" id="CHEBI:18420"/>
    </ligand>
</feature>
<feature type="binding site" evidence="1">
    <location>
        <position position="279"/>
    </location>
    <ligand>
        <name>ATP</name>
        <dbReference type="ChEBI" id="CHEBI:30616"/>
    </ligand>
</feature>
<feature type="binding site" evidence="1">
    <location>
        <position position="279"/>
    </location>
    <ligand>
        <name>Mg(2+)</name>
        <dbReference type="ChEBI" id="CHEBI:18420"/>
    </ligand>
</feature>
<keyword id="KW-0067">ATP-binding</keyword>
<keyword id="KW-0460">Magnesium</keyword>
<keyword id="KW-0464">Manganese</keyword>
<keyword id="KW-0479">Metal-binding</keyword>
<keyword id="KW-0547">Nucleotide-binding</keyword>
<keyword id="KW-0548">Nucleotidyltransferase</keyword>
<keyword id="KW-0808">Transferase</keyword>
<comment type="function">
    <text evidence="1">Nucleotidyltransferase involved in the post-translational modification of proteins. It can catalyze the addition of adenosine monophosphate (AMP) or uridine monophosphate (UMP) to a protein, resulting in modifications known as AMPylation and UMPylation.</text>
</comment>
<comment type="catalytic activity">
    <reaction evidence="1">
        <text>L-seryl-[protein] + ATP = 3-O-(5'-adenylyl)-L-seryl-[protein] + diphosphate</text>
        <dbReference type="Rhea" id="RHEA:58120"/>
        <dbReference type="Rhea" id="RHEA-COMP:9863"/>
        <dbReference type="Rhea" id="RHEA-COMP:15073"/>
        <dbReference type="ChEBI" id="CHEBI:29999"/>
        <dbReference type="ChEBI" id="CHEBI:30616"/>
        <dbReference type="ChEBI" id="CHEBI:33019"/>
        <dbReference type="ChEBI" id="CHEBI:142516"/>
        <dbReference type="EC" id="2.7.7.108"/>
    </reaction>
</comment>
<comment type="catalytic activity">
    <reaction evidence="1">
        <text>L-threonyl-[protein] + ATP = 3-O-(5'-adenylyl)-L-threonyl-[protein] + diphosphate</text>
        <dbReference type="Rhea" id="RHEA:54292"/>
        <dbReference type="Rhea" id="RHEA-COMP:11060"/>
        <dbReference type="Rhea" id="RHEA-COMP:13847"/>
        <dbReference type="ChEBI" id="CHEBI:30013"/>
        <dbReference type="ChEBI" id="CHEBI:30616"/>
        <dbReference type="ChEBI" id="CHEBI:33019"/>
        <dbReference type="ChEBI" id="CHEBI:138113"/>
        <dbReference type="EC" id="2.7.7.108"/>
    </reaction>
</comment>
<comment type="catalytic activity">
    <reaction evidence="1">
        <text>L-tyrosyl-[protein] + ATP = O-(5'-adenylyl)-L-tyrosyl-[protein] + diphosphate</text>
        <dbReference type="Rhea" id="RHEA:54288"/>
        <dbReference type="Rhea" id="RHEA-COMP:10136"/>
        <dbReference type="Rhea" id="RHEA-COMP:13846"/>
        <dbReference type="ChEBI" id="CHEBI:30616"/>
        <dbReference type="ChEBI" id="CHEBI:33019"/>
        <dbReference type="ChEBI" id="CHEBI:46858"/>
        <dbReference type="ChEBI" id="CHEBI:83624"/>
        <dbReference type="EC" id="2.7.7.108"/>
    </reaction>
</comment>
<comment type="catalytic activity">
    <reaction evidence="1">
        <text>L-histidyl-[protein] + UTP = N(tele)-(5'-uridylyl)-L-histidyl-[protein] + diphosphate</text>
        <dbReference type="Rhea" id="RHEA:83891"/>
        <dbReference type="Rhea" id="RHEA-COMP:9745"/>
        <dbReference type="Rhea" id="RHEA-COMP:20239"/>
        <dbReference type="ChEBI" id="CHEBI:29979"/>
        <dbReference type="ChEBI" id="CHEBI:33019"/>
        <dbReference type="ChEBI" id="CHEBI:46398"/>
        <dbReference type="ChEBI" id="CHEBI:233474"/>
    </reaction>
</comment>
<comment type="catalytic activity">
    <reaction evidence="1">
        <text>L-seryl-[protein] + UTP = O-(5'-uridylyl)-L-seryl-[protein] + diphosphate</text>
        <dbReference type="Rhea" id="RHEA:64604"/>
        <dbReference type="Rhea" id="RHEA-COMP:9863"/>
        <dbReference type="Rhea" id="RHEA-COMP:16635"/>
        <dbReference type="ChEBI" id="CHEBI:29999"/>
        <dbReference type="ChEBI" id="CHEBI:33019"/>
        <dbReference type="ChEBI" id="CHEBI:46398"/>
        <dbReference type="ChEBI" id="CHEBI:156051"/>
    </reaction>
</comment>
<comment type="catalytic activity">
    <reaction evidence="1">
        <text>L-tyrosyl-[protein] + UTP = O-(5'-uridylyl)-L-tyrosyl-[protein] + diphosphate</text>
        <dbReference type="Rhea" id="RHEA:83887"/>
        <dbReference type="Rhea" id="RHEA-COMP:10136"/>
        <dbReference type="Rhea" id="RHEA-COMP:20238"/>
        <dbReference type="ChEBI" id="CHEBI:33019"/>
        <dbReference type="ChEBI" id="CHEBI:46398"/>
        <dbReference type="ChEBI" id="CHEBI:46858"/>
        <dbReference type="ChEBI" id="CHEBI:90602"/>
    </reaction>
</comment>
<comment type="cofactor">
    <cofactor evidence="1">
        <name>Mg(2+)</name>
        <dbReference type="ChEBI" id="CHEBI:18420"/>
    </cofactor>
    <cofactor evidence="1">
        <name>Mn(2+)</name>
        <dbReference type="ChEBI" id="CHEBI:29035"/>
    </cofactor>
</comment>
<comment type="similarity">
    <text evidence="1">Belongs to the SELO family.</text>
</comment>
<organism>
    <name type="scientific">Cupriavidus pinatubonensis (strain JMP 134 / LMG 1197)</name>
    <name type="common">Cupriavidus necator (strain JMP 134)</name>
    <dbReference type="NCBI Taxonomy" id="264198"/>
    <lineage>
        <taxon>Bacteria</taxon>
        <taxon>Pseudomonadati</taxon>
        <taxon>Pseudomonadota</taxon>
        <taxon>Betaproteobacteria</taxon>
        <taxon>Burkholderiales</taxon>
        <taxon>Burkholderiaceae</taxon>
        <taxon>Cupriavidus</taxon>
    </lineage>
</organism>
<name>SELO_CUPPJ</name>
<sequence>MSDTHPSQTTPRDAADSVATLSAPFPTMPGFAELGERFFTRLRPTPLPSAYLVSVAPNAAALLGMPVEAASEPDFIEAFVGNSVPDWADPLATVYSGHQFGVWAGQLGDGRAIRLAQAQTDTGPWEIQLKGAGLTPYSRMADGRAVLRSSIREYLCSEAMAALGVPTTRALSIIGSDAPVRRETIETAAVVTRLAPTFIRFGHFEHFAAHEDVAALRQLADFVINNFMPACREAAQPYQALLREVSLRTADMVAHWQAIGFCHGVMNTDNMSILGLTIDYGPFGFLDAFDANHICNHSDTQGRYAYSQQPQVAFWNLHCLAQALLPLWLEPGADEAARDGAVAQAREALDPFRDRYASEFFRHYRAKLGIHMPAGGDKEDEPLLTSLFQLLHEQHVDYTLFWRNLARISSADGSGDAPVRDLFLDRAAWDTWAESYRNRLRAEQSDDAARRVAMLAVNPKYVLRNHLAEIAIRRAREKDFSEVDRLLAVLSRPFDEQPEAEAYAALPPDWAGGLEVSCSS</sequence>
<gene>
    <name evidence="1" type="primary">ydiU</name>
    <name evidence="1" type="synonym">selO</name>
    <name type="ordered locus">Reut_A1396</name>
</gene>
<reference key="1">
    <citation type="journal article" date="2010" name="PLoS ONE">
        <title>The complete multipartite genome sequence of Cupriavidus necator JMP134, a versatile pollutant degrader.</title>
        <authorList>
            <person name="Lykidis A."/>
            <person name="Perez-Pantoja D."/>
            <person name="Ledger T."/>
            <person name="Mavromatis K."/>
            <person name="Anderson I.J."/>
            <person name="Ivanova N.N."/>
            <person name="Hooper S.D."/>
            <person name="Lapidus A."/>
            <person name="Lucas S."/>
            <person name="Gonzalez B."/>
            <person name="Kyrpides N.C."/>
        </authorList>
    </citation>
    <scope>NUCLEOTIDE SEQUENCE [LARGE SCALE GENOMIC DNA]</scope>
    <source>
        <strain>JMP134 / LMG 1197</strain>
    </source>
</reference>
<protein>
    <recommendedName>
        <fullName evidence="1">Protein nucleotidyltransferase YdiU</fullName>
        <ecNumber evidence="1">2.7.7.-</ecNumber>
    </recommendedName>
    <alternativeName>
        <fullName evidence="1">Protein adenylyltransferase YdiU</fullName>
        <ecNumber evidence="1">2.7.7.108</ecNumber>
    </alternativeName>
    <alternativeName>
        <fullName evidence="1">Protein uridylyltransferase YdiU</fullName>
        <ecNumber evidence="1">2.7.7.-</ecNumber>
    </alternativeName>
</protein>
<evidence type="ECO:0000255" key="1">
    <source>
        <dbReference type="HAMAP-Rule" id="MF_00692"/>
    </source>
</evidence>
<proteinExistence type="inferred from homology"/>